<organism>
    <name type="scientific">Synechococcus sp. (strain JA-3-3Ab)</name>
    <name type="common">Cyanobacteria bacterium Yellowstone A-Prime</name>
    <dbReference type="NCBI Taxonomy" id="321327"/>
    <lineage>
        <taxon>Bacteria</taxon>
        <taxon>Bacillati</taxon>
        <taxon>Cyanobacteriota</taxon>
        <taxon>Cyanophyceae</taxon>
        <taxon>Synechococcales</taxon>
        <taxon>Synechococcaceae</taxon>
        <taxon>Synechococcus</taxon>
    </lineage>
</organism>
<sequence>MATTATRFPQFSQDLASDPTTRRLWYGIATAHDFETHDGMTEERLYQKLFATHFGHLAIIFLWASGNVFHIAWQGNYEQWVANPTGVTPIAHAIWDPQFGKAAVEAFTQPGGGGPVNAAYSGLYYWFNTIGLRTNGDLYAGAIGLLLLAAVFLFAGWLHLQPRFRPSLSWFKNAEARLNHHLAGLFGVSSLAWAGHLVHVAIPESRGQHVGWDNFLTTLPHPAGLKPFFTLNWGVYAQNPDTANHVWGTAEGAGTAILTFLGGFNPNTQSLWLTDMAHHHLAIAVIFIVAGHMYRTNWGIGHSIREILGAHNPPKGTPFGGLLGEGHRGLYDTVNNSLHFQLALALACLGVVTSLVAQHMYALNPYVFMSMDHTTEAALYTHHQYIAGFLMVGAFAHGAIFLVRDYDPEANKNNVLARVLDHKEAIISHLSWVSLFLGFHTLGLYVHNDVMQAFGTPEKQILIEPVFAQFIQASHGKMIYGMDVLLSNPDSIASTAWPNYGNVWLPGWLQAINDPNGFLFLPIGPGDFLVHHAIALGLHTTTLILVKGALDARGSKLMPDKKDFGYSFPCDGPGRGGTCDISAWDAFYLAMFWMLNTIGWVTFYWHWKHLGIWSGNTAQFNENSTYLMGWLRDYLWANSAQLINGYNPYGMNNLAVWAWMFLFGHLVWATGFMFLISWRGYWQELIETLVWAHERTPLANLIRWKDKPVALSIVQGRLVGLAHFTVGYVLTYAAFVIASTASLSG</sequence>
<dbReference type="EC" id="1.97.1.12" evidence="1"/>
<dbReference type="EMBL" id="CP000239">
    <property type="protein sequence ID" value="ABD00642.1"/>
    <property type="molecule type" value="Genomic_DNA"/>
</dbReference>
<dbReference type="RefSeq" id="WP_011431315.1">
    <property type="nucleotide sequence ID" value="NC_007775.1"/>
</dbReference>
<dbReference type="SMR" id="Q2JRU9"/>
<dbReference type="STRING" id="321327.CYA_2522"/>
<dbReference type="KEGG" id="cya:CYA_2522"/>
<dbReference type="eggNOG" id="COG2885">
    <property type="taxonomic scope" value="Bacteria"/>
</dbReference>
<dbReference type="HOGENOM" id="CLU_016126_1_0_3"/>
<dbReference type="OrthoDB" id="499313at2"/>
<dbReference type="Proteomes" id="UP000008818">
    <property type="component" value="Chromosome"/>
</dbReference>
<dbReference type="GO" id="GO:0009522">
    <property type="term" value="C:photosystem I"/>
    <property type="evidence" value="ECO:0007669"/>
    <property type="project" value="UniProtKB-KW"/>
</dbReference>
<dbReference type="GO" id="GO:0031676">
    <property type="term" value="C:plasma membrane-derived thylakoid membrane"/>
    <property type="evidence" value="ECO:0007669"/>
    <property type="project" value="UniProtKB-SubCell"/>
</dbReference>
<dbReference type="GO" id="GO:0051539">
    <property type="term" value="F:4 iron, 4 sulfur cluster binding"/>
    <property type="evidence" value="ECO:0007669"/>
    <property type="project" value="UniProtKB-KW"/>
</dbReference>
<dbReference type="GO" id="GO:0016168">
    <property type="term" value="F:chlorophyll binding"/>
    <property type="evidence" value="ECO:0007669"/>
    <property type="project" value="UniProtKB-KW"/>
</dbReference>
<dbReference type="GO" id="GO:0009055">
    <property type="term" value="F:electron transfer activity"/>
    <property type="evidence" value="ECO:0007669"/>
    <property type="project" value="UniProtKB-UniRule"/>
</dbReference>
<dbReference type="GO" id="GO:0000287">
    <property type="term" value="F:magnesium ion binding"/>
    <property type="evidence" value="ECO:0007669"/>
    <property type="project" value="UniProtKB-UniRule"/>
</dbReference>
<dbReference type="GO" id="GO:0016491">
    <property type="term" value="F:oxidoreductase activity"/>
    <property type="evidence" value="ECO:0007669"/>
    <property type="project" value="UniProtKB-KW"/>
</dbReference>
<dbReference type="GO" id="GO:0015979">
    <property type="term" value="P:photosynthesis"/>
    <property type="evidence" value="ECO:0007669"/>
    <property type="project" value="UniProtKB-UniRule"/>
</dbReference>
<dbReference type="FunFam" id="1.20.1130.10:FF:000001">
    <property type="entry name" value="Photosystem I P700 chlorophyll a apoprotein A2"/>
    <property type="match status" value="1"/>
</dbReference>
<dbReference type="Gene3D" id="1.20.1130.10">
    <property type="entry name" value="Photosystem I PsaA/PsaB"/>
    <property type="match status" value="1"/>
</dbReference>
<dbReference type="HAMAP" id="MF_00482">
    <property type="entry name" value="PSI_PsaB"/>
    <property type="match status" value="1"/>
</dbReference>
<dbReference type="InterPro" id="IPR001280">
    <property type="entry name" value="PSI_PsaA/B"/>
</dbReference>
<dbReference type="InterPro" id="IPR020586">
    <property type="entry name" value="PSI_PsaA/B_CS"/>
</dbReference>
<dbReference type="InterPro" id="IPR036408">
    <property type="entry name" value="PSI_PsaA/B_sf"/>
</dbReference>
<dbReference type="InterPro" id="IPR006244">
    <property type="entry name" value="PSI_PsaB"/>
</dbReference>
<dbReference type="NCBIfam" id="TIGR01336">
    <property type="entry name" value="psaB"/>
    <property type="match status" value="1"/>
</dbReference>
<dbReference type="PANTHER" id="PTHR30128">
    <property type="entry name" value="OUTER MEMBRANE PROTEIN, OMPA-RELATED"/>
    <property type="match status" value="1"/>
</dbReference>
<dbReference type="PANTHER" id="PTHR30128:SF19">
    <property type="entry name" value="PHOTOSYSTEM I P700 CHLOROPHYLL A APOPROTEIN A1-RELATED"/>
    <property type="match status" value="1"/>
</dbReference>
<dbReference type="Pfam" id="PF00223">
    <property type="entry name" value="PsaA_PsaB"/>
    <property type="match status" value="1"/>
</dbReference>
<dbReference type="PIRSF" id="PIRSF002905">
    <property type="entry name" value="PSI_A"/>
    <property type="match status" value="1"/>
</dbReference>
<dbReference type="PRINTS" id="PR00257">
    <property type="entry name" value="PHOTSYSPSAAB"/>
</dbReference>
<dbReference type="SUPFAM" id="SSF81558">
    <property type="entry name" value="Photosystem I subunits PsaA/PsaB"/>
    <property type="match status" value="1"/>
</dbReference>
<dbReference type="PROSITE" id="PS00419">
    <property type="entry name" value="PHOTOSYSTEM_I_PSAAB"/>
    <property type="match status" value="1"/>
</dbReference>
<evidence type="ECO:0000255" key="1">
    <source>
        <dbReference type="HAMAP-Rule" id="MF_00482"/>
    </source>
</evidence>
<keyword id="KW-0004">4Fe-4S</keyword>
<keyword id="KW-0148">Chlorophyll</keyword>
<keyword id="KW-0157">Chromophore</keyword>
<keyword id="KW-0249">Electron transport</keyword>
<keyword id="KW-0408">Iron</keyword>
<keyword id="KW-0411">Iron-sulfur</keyword>
<keyword id="KW-0460">Magnesium</keyword>
<keyword id="KW-0472">Membrane</keyword>
<keyword id="KW-0479">Metal-binding</keyword>
<keyword id="KW-0560">Oxidoreductase</keyword>
<keyword id="KW-0602">Photosynthesis</keyword>
<keyword id="KW-0603">Photosystem I</keyword>
<keyword id="KW-0793">Thylakoid</keyword>
<keyword id="KW-0812">Transmembrane</keyword>
<keyword id="KW-1133">Transmembrane helix</keyword>
<keyword id="KW-0813">Transport</keyword>
<reference key="1">
    <citation type="journal article" date="2007" name="ISME J.">
        <title>Population level functional diversity in a microbial community revealed by comparative genomic and metagenomic analyses.</title>
        <authorList>
            <person name="Bhaya D."/>
            <person name="Grossman A.R."/>
            <person name="Steunou A.-S."/>
            <person name="Khuri N."/>
            <person name="Cohan F.M."/>
            <person name="Hamamura N."/>
            <person name="Melendrez M.C."/>
            <person name="Bateson M.M."/>
            <person name="Ward D.M."/>
            <person name="Heidelberg J.F."/>
        </authorList>
    </citation>
    <scope>NUCLEOTIDE SEQUENCE [LARGE SCALE GENOMIC DNA]</scope>
    <source>
        <strain>JA-3-3Ab</strain>
    </source>
</reference>
<feature type="chain" id="PRO_0000300027" description="Photosystem I P700 chlorophyll a apoprotein A2">
    <location>
        <begin position="1"/>
        <end position="745"/>
    </location>
</feature>
<feature type="transmembrane region" description="Helical; Name=I" evidence="1">
    <location>
        <begin position="49"/>
        <end position="72"/>
    </location>
</feature>
<feature type="transmembrane region" description="Helical; Name=II" evidence="1">
    <location>
        <begin position="138"/>
        <end position="161"/>
    </location>
</feature>
<feature type="transmembrane region" description="Helical; Name=III" evidence="1">
    <location>
        <begin position="178"/>
        <end position="202"/>
    </location>
</feature>
<feature type="transmembrane region" description="Helical; Name=IV" evidence="1">
    <location>
        <begin position="276"/>
        <end position="294"/>
    </location>
</feature>
<feature type="transmembrane region" description="Helical; Name=V" evidence="1">
    <location>
        <begin position="338"/>
        <end position="361"/>
    </location>
</feature>
<feature type="transmembrane region" description="Helical; Name=VI" evidence="1">
    <location>
        <begin position="377"/>
        <end position="403"/>
    </location>
</feature>
<feature type="transmembrane region" description="Helical; Name=VII" evidence="1">
    <location>
        <begin position="425"/>
        <end position="447"/>
    </location>
</feature>
<feature type="transmembrane region" description="Helical; Name=VIII" evidence="1">
    <location>
        <begin position="528"/>
        <end position="546"/>
    </location>
</feature>
<feature type="transmembrane region" description="Helical; Name=IX" evidence="1">
    <location>
        <begin position="586"/>
        <end position="607"/>
    </location>
</feature>
<feature type="transmembrane region" description="Helical; Name=X" evidence="1">
    <location>
        <begin position="654"/>
        <end position="676"/>
    </location>
</feature>
<feature type="transmembrane region" description="Helical; Name=XI" evidence="1">
    <location>
        <begin position="718"/>
        <end position="738"/>
    </location>
</feature>
<feature type="binding site" evidence="1">
    <location>
        <position position="570"/>
    </location>
    <ligand>
        <name>[4Fe-4S] cluster</name>
        <dbReference type="ChEBI" id="CHEBI:49883"/>
        <note>ligand shared between dimeric partners</note>
    </ligand>
</feature>
<feature type="binding site" evidence="1">
    <location>
        <position position="579"/>
    </location>
    <ligand>
        <name>[4Fe-4S] cluster</name>
        <dbReference type="ChEBI" id="CHEBI:49883"/>
        <note>ligand shared between dimeric partners</note>
    </ligand>
</feature>
<feature type="binding site" description="axial binding residue" evidence="1">
    <location>
        <position position="665"/>
    </location>
    <ligand>
        <name>chlorophyll a</name>
        <dbReference type="ChEBI" id="CHEBI:58416"/>
        <label>B1</label>
    </ligand>
    <ligandPart>
        <name>Mg</name>
        <dbReference type="ChEBI" id="CHEBI:25107"/>
    </ligandPart>
</feature>
<feature type="binding site" description="axial binding residue" evidence="1">
    <location>
        <position position="673"/>
    </location>
    <ligand>
        <name>chlorophyll a</name>
        <dbReference type="ChEBI" id="CHEBI:58416"/>
        <label>B3</label>
    </ligand>
    <ligandPart>
        <name>Mg</name>
        <dbReference type="ChEBI" id="CHEBI:25107"/>
    </ligandPart>
</feature>
<feature type="binding site" evidence="1">
    <location>
        <position position="681"/>
    </location>
    <ligand>
        <name>chlorophyll a</name>
        <dbReference type="ChEBI" id="CHEBI:58416"/>
        <label>B3</label>
    </ligand>
</feature>
<feature type="binding site" evidence="1">
    <location>
        <position position="682"/>
    </location>
    <ligand>
        <name>phylloquinone</name>
        <dbReference type="ChEBI" id="CHEBI:18067"/>
        <label>B</label>
    </ligand>
</feature>
<gene>
    <name evidence="1" type="primary">psaB</name>
    <name type="ordered locus">CYA_2522</name>
</gene>
<protein>
    <recommendedName>
        <fullName evidence="1">Photosystem I P700 chlorophyll a apoprotein A2</fullName>
        <ecNumber evidence="1">1.97.1.12</ecNumber>
    </recommendedName>
    <alternativeName>
        <fullName evidence="1">PsaB</fullName>
    </alternativeName>
</protein>
<name>PSAB_SYNJA</name>
<comment type="function">
    <text evidence="1">PsaA and PsaB bind P700, the primary electron donor of photosystem I (PSI), as well as the electron acceptors A0, A1 and FX. PSI is a plastocyanin/cytochrome c6-ferredoxin oxidoreductase, converting photonic excitation into a charge separation, which transfers an electron from the donor P700 chlorophyll pair to the spectroscopically characterized acceptors A0, A1, FX, FA and FB in turn. Oxidized P700 is reduced on the lumenal side of the thylakoid membrane by plastocyanin or cytochrome c6.</text>
</comment>
<comment type="catalytic activity">
    <reaction evidence="1">
        <text>reduced [plastocyanin] + hnu + oxidized [2Fe-2S]-[ferredoxin] = oxidized [plastocyanin] + reduced [2Fe-2S]-[ferredoxin]</text>
        <dbReference type="Rhea" id="RHEA:30407"/>
        <dbReference type="Rhea" id="RHEA-COMP:10000"/>
        <dbReference type="Rhea" id="RHEA-COMP:10001"/>
        <dbReference type="Rhea" id="RHEA-COMP:10039"/>
        <dbReference type="Rhea" id="RHEA-COMP:10040"/>
        <dbReference type="ChEBI" id="CHEBI:29036"/>
        <dbReference type="ChEBI" id="CHEBI:30212"/>
        <dbReference type="ChEBI" id="CHEBI:33737"/>
        <dbReference type="ChEBI" id="CHEBI:33738"/>
        <dbReference type="ChEBI" id="CHEBI:49552"/>
        <dbReference type="EC" id="1.97.1.12"/>
    </reaction>
</comment>
<comment type="cofactor">
    <text evidence="1">PSI electron transfer chain: 5 chlorophyll a, 1 chlorophyll a', 2 phylloquinones and 3 4Fe-4S clusters. PSI core antenna: 90 chlorophyll a, 22 carotenoids, 3 phospholipids and 1 galactolipid. P700 is a chlorophyll a/chlorophyll a' dimer, A0 is one or more chlorophyll a, A1 is one or both phylloquinones and FX is a shared 4Fe-4S iron-sulfur center.</text>
</comment>
<comment type="subunit">
    <text evidence="1">The PsaA/B heterodimer binds the P700 chlorophyll special pair and subsequent electron acceptors. PSI consists of a core antenna complex that captures photons, and an electron transfer chain that converts photonic excitation into a charge separation. The cyanobacterial PSI reaction center is composed of one copy each of PsaA,B,C,D,E,F,I,J,K,L,M and X, and forms trimeric complexes.</text>
</comment>
<comment type="subcellular location">
    <subcellularLocation>
        <location evidence="1">Cellular thylakoid membrane</location>
        <topology evidence="1">Multi-pass membrane protein</topology>
    </subcellularLocation>
</comment>
<comment type="similarity">
    <text evidence="1">Belongs to the PsaA/PsaB family.</text>
</comment>
<proteinExistence type="inferred from homology"/>
<accession>Q2JRU9</accession>